<protein>
    <recommendedName>
        <fullName>PI-PLC X domain-containing protein 3</fullName>
    </recommendedName>
</protein>
<name>PLCX3_BOVIN</name>
<reference key="1">
    <citation type="submission" date="2007-07" db="EMBL/GenBank/DDBJ databases">
        <authorList>
            <consortium name="NIH - Mammalian Gene Collection (MGC) project"/>
        </authorList>
    </citation>
    <scope>NUCLEOTIDE SEQUENCE [LARGE SCALE MRNA]</scope>
    <source>
        <strain>Hereford</strain>
        <tissue>Hypothalamus</tissue>
    </source>
</reference>
<evidence type="ECO:0000255" key="1">
    <source>
        <dbReference type="PROSITE-ProRule" id="PRU00270"/>
    </source>
</evidence>
<proteinExistence type="evidence at transcript level"/>
<keyword id="KW-0378">Hydrolase</keyword>
<keyword id="KW-0442">Lipid degradation</keyword>
<keyword id="KW-0443">Lipid metabolism</keyword>
<keyword id="KW-1185">Reference proteome</keyword>
<keyword id="KW-0807">Transducer</keyword>
<sequence>MASSQGKNELKFADWMATLPESIHSIPLTNLAIPGSHDSFSFYIDEASPVGPEQPETVQNFVSVFGTVAKKLMRKWLATQTMNFTGQLGAGIRYFDLRISTKPRDPDNELYFAHGLFSAKVNEGLEEINAFLTDHHKELVFLDFNHFYGMQKYHHEKLVQMLKDIYGNKMCPAIFAQEVSLKYLWEKDYQVLVFYHSPVALEVPFLWPGQMMPAPWANTTDPEKLIQFLQASITERRKKGSFFISQVVLTPKASTVVKGVASGLRETITERALPAMMQWVRTQKPGESGINIVTADFVELGDFISTVIKLNYVFEEGEANT</sequence>
<accession>A6QNU9</accession>
<feature type="chain" id="PRO_0000305692" description="PI-PLC X domain-containing protein 3">
    <location>
        <begin position="1"/>
        <end position="321"/>
    </location>
</feature>
<feature type="domain" description="PI-PLC X-box" evidence="1">
    <location>
        <begin position="22"/>
        <end position="197"/>
    </location>
</feature>
<feature type="active site" evidence="1">
    <location>
        <position position="37"/>
    </location>
</feature>
<feature type="active site" evidence="1">
    <location>
        <position position="114"/>
    </location>
</feature>
<organism>
    <name type="scientific">Bos taurus</name>
    <name type="common">Bovine</name>
    <dbReference type="NCBI Taxonomy" id="9913"/>
    <lineage>
        <taxon>Eukaryota</taxon>
        <taxon>Metazoa</taxon>
        <taxon>Chordata</taxon>
        <taxon>Craniata</taxon>
        <taxon>Vertebrata</taxon>
        <taxon>Euteleostomi</taxon>
        <taxon>Mammalia</taxon>
        <taxon>Eutheria</taxon>
        <taxon>Laurasiatheria</taxon>
        <taxon>Artiodactyla</taxon>
        <taxon>Ruminantia</taxon>
        <taxon>Pecora</taxon>
        <taxon>Bovidae</taxon>
        <taxon>Bovinae</taxon>
        <taxon>Bos</taxon>
    </lineage>
</organism>
<dbReference type="EMBL" id="BC149012">
    <property type="protein sequence ID" value="AAI49013.1"/>
    <property type="molecule type" value="mRNA"/>
</dbReference>
<dbReference type="RefSeq" id="NP_001096774.1">
    <property type="nucleotide sequence ID" value="NM_001103304.2"/>
</dbReference>
<dbReference type="SMR" id="A6QNU9"/>
<dbReference type="FunCoup" id="A6QNU9">
    <property type="interactions" value="119"/>
</dbReference>
<dbReference type="STRING" id="9913.ENSBTAP00000014357"/>
<dbReference type="PaxDb" id="9913-ENSBTAP00000014357"/>
<dbReference type="GeneID" id="781239"/>
<dbReference type="KEGG" id="bta:781239"/>
<dbReference type="CTD" id="345557"/>
<dbReference type="eggNOG" id="KOG4306">
    <property type="taxonomic scope" value="Eukaryota"/>
</dbReference>
<dbReference type="InParanoid" id="A6QNU9"/>
<dbReference type="OrthoDB" id="1046782at2759"/>
<dbReference type="Proteomes" id="UP000009136">
    <property type="component" value="Unplaced"/>
</dbReference>
<dbReference type="GO" id="GO:0045202">
    <property type="term" value="C:synapse"/>
    <property type="evidence" value="ECO:0000318"/>
    <property type="project" value="GO_Central"/>
</dbReference>
<dbReference type="GO" id="GO:0008081">
    <property type="term" value="F:phosphoric diester hydrolase activity"/>
    <property type="evidence" value="ECO:0000318"/>
    <property type="project" value="GO_Central"/>
</dbReference>
<dbReference type="GO" id="GO:0016042">
    <property type="term" value="P:lipid catabolic process"/>
    <property type="evidence" value="ECO:0007669"/>
    <property type="project" value="UniProtKB-KW"/>
</dbReference>
<dbReference type="GO" id="GO:0007165">
    <property type="term" value="P:signal transduction"/>
    <property type="evidence" value="ECO:0007669"/>
    <property type="project" value="UniProtKB-KW"/>
</dbReference>
<dbReference type="CDD" id="cd08616">
    <property type="entry name" value="PI-PLCXD1c"/>
    <property type="match status" value="1"/>
</dbReference>
<dbReference type="FunFam" id="3.20.20.190:FF:000021">
    <property type="entry name" value="PI-PLC X domain-containing protein 3"/>
    <property type="match status" value="1"/>
</dbReference>
<dbReference type="Gene3D" id="3.20.20.190">
    <property type="entry name" value="Phosphatidylinositol (PI) phosphodiesterase"/>
    <property type="match status" value="1"/>
</dbReference>
<dbReference type="InterPro" id="IPR051057">
    <property type="entry name" value="PI-PLC_domain"/>
</dbReference>
<dbReference type="InterPro" id="IPR017946">
    <property type="entry name" value="PLC-like_Pdiesterase_TIM-brl"/>
</dbReference>
<dbReference type="InterPro" id="IPR042158">
    <property type="entry name" value="PLCXD1/2/3"/>
</dbReference>
<dbReference type="InterPro" id="IPR000909">
    <property type="entry name" value="PLipase_C_PInositol-sp_X_dom"/>
</dbReference>
<dbReference type="PANTHER" id="PTHR13593">
    <property type="match status" value="1"/>
</dbReference>
<dbReference type="PANTHER" id="PTHR13593:SF33">
    <property type="entry name" value="PI-PLC X DOMAIN-CONTAINING PROTEIN 3"/>
    <property type="match status" value="1"/>
</dbReference>
<dbReference type="Pfam" id="PF00388">
    <property type="entry name" value="PI-PLC-X"/>
    <property type="match status" value="1"/>
</dbReference>
<dbReference type="SMART" id="SM00148">
    <property type="entry name" value="PLCXc"/>
    <property type="match status" value="1"/>
</dbReference>
<dbReference type="SUPFAM" id="SSF51695">
    <property type="entry name" value="PLC-like phosphodiesterases"/>
    <property type="match status" value="1"/>
</dbReference>
<dbReference type="PROSITE" id="PS50007">
    <property type="entry name" value="PIPLC_X_DOMAIN"/>
    <property type="match status" value="1"/>
</dbReference>
<gene>
    <name type="primary">PLCXD3</name>
</gene>